<sequence length="404" mass="43508">MKRTVIMMLDSFGVGAAGDAAKFGDVGSDTFGHIAKACAEGKADTGRKGPLALPNLARLGLAHAAMESTGAFAPGFADNVDLIGAYGHAQELSSGKDTPSGHWEMAGVPVLFEWGYFSEHQNSFPKELTDKILARAGLDGFLGNCHASGTTILEELGEEHMRSGKPIFYTSADSVFQIACHEGTFGLENLYRLCEIAREELEPYNIGRVIARPFDGTGPSDFARTGNRKDYSLEPPAKTVLDKLKAAGGEVVSVGKIADIYAYCGITKKVKANGLEALFDATLAEVKSAGENTIVFTNFVDFDSHYGHRRDVAGYAKGLEYFDARLPEMLALLDEDDLLILTADHGCDPTWQGTDHTREYVPVLAYGAGLKAGSLGRRNSFADIGQSIASYFKLEPMEYGESFI</sequence>
<organism>
    <name type="scientific">Shewanella oneidensis (strain ATCC 700550 / JCM 31522 / CIP 106686 / LMG 19005 / NCIMB 14063 / MR-1)</name>
    <dbReference type="NCBI Taxonomy" id="211586"/>
    <lineage>
        <taxon>Bacteria</taxon>
        <taxon>Pseudomonadati</taxon>
        <taxon>Pseudomonadota</taxon>
        <taxon>Gammaproteobacteria</taxon>
        <taxon>Alteromonadales</taxon>
        <taxon>Shewanellaceae</taxon>
        <taxon>Shewanella</taxon>
    </lineage>
</organism>
<keyword id="KW-0963">Cytoplasm</keyword>
<keyword id="KW-0413">Isomerase</keyword>
<keyword id="KW-0464">Manganese</keyword>
<keyword id="KW-0479">Metal-binding</keyword>
<keyword id="KW-1185">Reference proteome</keyword>
<comment type="function">
    <text evidence="1">Isomerase that catalyzes the conversion of deoxy-ribose 1-phosphate (dRib-1-P) and ribose 1-phosphate (Rib-1-P) to deoxy-ribose 5-phosphate (dRib-5-P) and ribose 5-phosphate (Rib-5-P), respectively.</text>
</comment>
<comment type="catalytic activity">
    <reaction evidence="1">
        <text>2-deoxy-alpha-D-ribose 1-phosphate = 2-deoxy-D-ribose 5-phosphate</text>
        <dbReference type="Rhea" id="RHEA:27658"/>
        <dbReference type="ChEBI" id="CHEBI:57259"/>
        <dbReference type="ChEBI" id="CHEBI:62877"/>
        <dbReference type="EC" id="5.4.2.7"/>
    </reaction>
</comment>
<comment type="catalytic activity">
    <reaction evidence="1">
        <text>alpha-D-ribose 1-phosphate = D-ribose 5-phosphate</text>
        <dbReference type="Rhea" id="RHEA:18793"/>
        <dbReference type="ChEBI" id="CHEBI:57720"/>
        <dbReference type="ChEBI" id="CHEBI:78346"/>
        <dbReference type="EC" id="5.4.2.7"/>
    </reaction>
</comment>
<comment type="cofactor">
    <cofactor evidence="1">
        <name>Mn(2+)</name>
        <dbReference type="ChEBI" id="CHEBI:29035"/>
    </cofactor>
    <text evidence="1">Binds 2 manganese ions.</text>
</comment>
<comment type="pathway">
    <text evidence="1">Carbohydrate degradation; 2-deoxy-D-ribose 1-phosphate degradation; D-glyceraldehyde 3-phosphate and acetaldehyde from 2-deoxy-alpha-D-ribose 1-phosphate: step 1/2.</text>
</comment>
<comment type="subcellular location">
    <subcellularLocation>
        <location evidence="1">Cytoplasm</location>
    </subcellularLocation>
</comment>
<comment type="similarity">
    <text evidence="1">Belongs to the phosphopentomutase family.</text>
</comment>
<protein>
    <recommendedName>
        <fullName evidence="1">Phosphopentomutase</fullName>
        <ecNumber evidence="1">5.4.2.7</ecNumber>
    </recommendedName>
    <alternativeName>
        <fullName evidence="1">Phosphodeoxyribomutase</fullName>
    </alternativeName>
</protein>
<name>DEOB_SHEON</name>
<reference key="1">
    <citation type="journal article" date="2002" name="Nat. Biotechnol.">
        <title>Genome sequence of the dissimilatory metal ion-reducing bacterium Shewanella oneidensis.</title>
        <authorList>
            <person name="Heidelberg J.F."/>
            <person name="Paulsen I.T."/>
            <person name="Nelson K.E."/>
            <person name="Gaidos E.J."/>
            <person name="Nelson W.C."/>
            <person name="Read T.D."/>
            <person name="Eisen J.A."/>
            <person name="Seshadri R."/>
            <person name="Ward N.L."/>
            <person name="Methe B.A."/>
            <person name="Clayton R.A."/>
            <person name="Meyer T."/>
            <person name="Tsapin A."/>
            <person name="Scott J."/>
            <person name="Beanan M.J."/>
            <person name="Brinkac L.M."/>
            <person name="Daugherty S.C."/>
            <person name="DeBoy R.T."/>
            <person name="Dodson R.J."/>
            <person name="Durkin A.S."/>
            <person name="Haft D.H."/>
            <person name="Kolonay J.F."/>
            <person name="Madupu R."/>
            <person name="Peterson J.D."/>
            <person name="Umayam L.A."/>
            <person name="White O."/>
            <person name="Wolf A.M."/>
            <person name="Vamathevan J.J."/>
            <person name="Weidman J.F."/>
            <person name="Impraim M."/>
            <person name="Lee K."/>
            <person name="Berry K.J."/>
            <person name="Lee C."/>
            <person name="Mueller J."/>
            <person name="Khouri H.M."/>
            <person name="Gill J."/>
            <person name="Utterback T.R."/>
            <person name="McDonald L.A."/>
            <person name="Feldblyum T.V."/>
            <person name="Smith H.O."/>
            <person name="Venter J.C."/>
            <person name="Nealson K.H."/>
            <person name="Fraser C.M."/>
        </authorList>
    </citation>
    <scope>NUCLEOTIDE SEQUENCE [LARGE SCALE GENOMIC DNA]</scope>
    <source>
        <strain>ATCC 700550 / JCM 31522 / CIP 106686 / LMG 19005 / NCIMB 14063 / MR-1</strain>
    </source>
</reference>
<feature type="chain" id="PRO_0000199837" description="Phosphopentomutase">
    <location>
        <begin position="1"/>
        <end position="404"/>
    </location>
</feature>
<feature type="binding site" evidence="1">
    <location>
        <position position="10"/>
    </location>
    <ligand>
        <name>Mn(2+)</name>
        <dbReference type="ChEBI" id="CHEBI:29035"/>
        <label>1</label>
    </ligand>
</feature>
<feature type="binding site" evidence="1">
    <location>
        <position position="303"/>
    </location>
    <ligand>
        <name>Mn(2+)</name>
        <dbReference type="ChEBI" id="CHEBI:29035"/>
        <label>2</label>
    </ligand>
</feature>
<feature type="binding site" evidence="1">
    <location>
        <position position="308"/>
    </location>
    <ligand>
        <name>Mn(2+)</name>
        <dbReference type="ChEBI" id="CHEBI:29035"/>
        <label>2</label>
    </ligand>
</feature>
<feature type="binding site" evidence="1">
    <location>
        <position position="344"/>
    </location>
    <ligand>
        <name>Mn(2+)</name>
        <dbReference type="ChEBI" id="CHEBI:29035"/>
        <label>1</label>
    </ligand>
</feature>
<feature type="binding site" evidence="1">
    <location>
        <position position="345"/>
    </location>
    <ligand>
        <name>Mn(2+)</name>
        <dbReference type="ChEBI" id="CHEBI:29035"/>
        <label>1</label>
    </ligand>
</feature>
<feature type="binding site" evidence="1">
    <location>
        <position position="356"/>
    </location>
    <ligand>
        <name>Mn(2+)</name>
        <dbReference type="ChEBI" id="CHEBI:29035"/>
        <label>2</label>
    </ligand>
</feature>
<proteinExistence type="inferred from homology"/>
<dbReference type="EC" id="5.4.2.7" evidence="1"/>
<dbReference type="EMBL" id="AE014299">
    <property type="protein sequence ID" value="AAN54287.1"/>
    <property type="molecule type" value="Genomic_DNA"/>
</dbReference>
<dbReference type="RefSeq" id="NP_716842.1">
    <property type="nucleotide sequence ID" value="NC_004347.2"/>
</dbReference>
<dbReference type="RefSeq" id="WP_011071448.1">
    <property type="nucleotide sequence ID" value="NC_004347.2"/>
</dbReference>
<dbReference type="SMR" id="Q8EHK2"/>
<dbReference type="STRING" id="211586.SO_1219"/>
<dbReference type="PaxDb" id="211586-SO_1219"/>
<dbReference type="KEGG" id="son:SO_1219"/>
<dbReference type="PATRIC" id="fig|211586.12.peg.1171"/>
<dbReference type="eggNOG" id="COG1015">
    <property type="taxonomic scope" value="Bacteria"/>
</dbReference>
<dbReference type="HOGENOM" id="CLU_053861_0_0_6"/>
<dbReference type="OrthoDB" id="9769930at2"/>
<dbReference type="PhylomeDB" id="Q8EHK2"/>
<dbReference type="BioCyc" id="SONE211586:G1GMP-1130-MONOMER"/>
<dbReference type="UniPathway" id="UPA00002">
    <property type="reaction ID" value="UER00467"/>
</dbReference>
<dbReference type="Proteomes" id="UP000008186">
    <property type="component" value="Chromosome"/>
</dbReference>
<dbReference type="GO" id="GO:0005829">
    <property type="term" value="C:cytosol"/>
    <property type="evidence" value="ECO:0000318"/>
    <property type="project" value="GO_Central"/>
</dbReference>
<dbReference type="GO" id="GO:0000287">
    <property type="term" value="F:magnesium ion binding"/>
    <property type="evidence" value="ECO:0007669"/>
    <property type="project" value="InterPro"/>
</dbReference>
<dbReference type="GO" id="GO:0030145">
    <property type="term" value="F:manganese ion binding"/>
    <property type="evidence" value="ECO:0007669"/>
    <property type="project" value="UniProtKB-UniRule"/>
</dbReference>
<dbReference type="GO" id="GO:0008973">
    <property type="term" value="F:phosphopentomutase activity"/>
    <property type="evidence" value="ECO:0000318"/>
    <property type="project" value="GO_Central"/>
</dbReference>
<dbReference type="GO" id="GO:0006018">
    <property type="term" value="P:2-deoxyribose 1-phosphate catabolic process"/>
    <property type="evidence" value="ECO:0007669"/>
    <property type="project" value="UniProtKB-UniRule"/>
</dbReference>
<dbReference type="GO" id="GO:0006015">
    <property type="term" value="P:5-phosphoribose 1-diphosphate biosynthetic process"/>
    <property type="evidence" value="ECO:0007669"/>
    <property type="project" value="UniProtKB-UniPathway"/>
</dbReference>
<dbReference type="GO" id="GO:0043094">
    <property type="term" value="P:metabolic compound salvage"/>
    <property type="evidence" value="ECO:0007669"/>
    <property type="project" value="InterPro"/>
</dbReference>
<dbReference type="GO" id="GO:0009117">
    <property type="term" value="P:nucleotide metabolic process"/>
    <property type="evidence" value="ECO:0007669"/>
    <property type="project" value="InterPro"/>
</dbReference>
<dbReference type="CDD" id="cd16009">
    <property type="entry name" value="PPM"/>
    <property type="match status" value="1"/>
</dbReference>
<dbReference type="FunFam" id="3.30.70.1250:FF:000001">
    <property type="entry name" value="Phosphopentomutase"/>
    <property type="match status" value="1"/>
</dbReference>
<dbReference type="Gene3D" id="3.40.720.10">
    <property type="entry name" value="Alkaline Phosphatase, subunit A"/>
    <property type="match status" value="1"/>
</dbReference>
<dbReference type="Gene3D" id="3.30.70.1250">
    <property type="entry name" value="Phosphopentomutase"/>
    <property type="match status" value="1"/>
</dbReference>
<dbReference type="HAMAP" id="MF_00740">
    <property type="entry name" value="Phosphopentomut"/>
    <property type="match status" value="1"/>
</dbReference>
<dbReference type="InterPro" id="IPR017850">
    <property type="entry name" value="Alkaline_phosphatase_core_sf"/>
</dbReference>
<dbReference type="InterPro" id="IPR010045">
    <property type="entry name" value="DeoB"/>
</dbReference>
<dbReference type="InterPro" id="IPR006124">
    <property type="entry name" value="Metalloenzyme"/>
</dbReference>
<dbReference type="InterPro" id="IPR024052">
    <property type="entry name" value="Phosphopentomutase_DeoB_cap_sf"/>
</dbReference>
<dbReference type="NCBIfam" id="TIGR01696">
    <property type="entry name" value="deoB"/>
    <property type="match status" value="1"/>
</dbReference>
<dbReference type="NCBIfam" id="NF003766">
    <property type="entry name" value="PRK05362.1"/>
    <property type="match status" value="1"/>
</dbReference>
<dbReference type="PANTHER" id="PTHR21110">
    <property type="entry name" value="PHOSPHOPENTOMUTASE"/>
    <property type="match status" value="1"/>
</dbReference>
<dbReference type="PANTHER" id="PTHR21110:SF0">
    <property type="entry name" value="PHOSPHOPENTOMUTASE"/>
    <property type="match status" value="1"/>
</dbReference>
<dbReference type="Pfam" id="PF01676">
    <property type="entry name" value="Metalloenzyme"/>
    <property type="match status" value="1"/>
</dbReference>
<dbReference type="PIRSF" id="PIRSF001491">
    <property type="entry name" value="Ppentomutase"/>
    <property type="match status" value="1"/>
</dbReference>
<dbReference type="SUPFAM" id="SSF53649">
    <property type="entry name" value="Alkaline phosphatase-like"/>
    <property type="match status" value="1"/>
</dbReference>
<dbReference type="SUPFAM" id="SSF143856">
    <property type="entry name" value="DeoB insert domain-like"/>
    <property type="match status" value="1"/>
</dbReference>
<evidence type="ECO:0000255" key="1">
    <source>
        <dbReference type="HAMAP-Rule" id="MF_00740"/>
    </source>
</evidence>
<accession>Q8EHK2</accession>
<gene>
    <name evidence="1" type="primary">deoB</name>
    <name type="ordered locus">SO_1219</name>
</gene>